<protein>
    <recommendedName>
        <fullName>LOB domain-containing protein 3</fullName>
    </recommendedName>
    <alternativeName>
        <fullName>ASYMMETRIC LEAVES 2-like protein 9</fullName>
        <shortName>AS2-like protein 9</shortName>
    </alternativeName>
</protein>
<sequence>MRQKGHRHGRTVSPCAGCKLLRRKCVKDSCVFAPYFPAKEPYKFAIVHKIFGASNVNKMLQELSENHRSDAVDSMVYEANARIQDPVYGCVGTISSLHRQLETLQTQLAFAQAELIHIRTLHRIHTKPPPYTASTVTFPSNKDFYSDIDMAVAYTDDAGDFLWSC</sequence>
<evidence type="ECO:0000255" key="1">
    <source>
        <dbReference type="PROSITE-ProRule" id="PRU00291"/>
    </source>
</evidence>
<evidence type="ECO:0000269" key="2">
    <source>
    </source>
</evidence>
<evidence type="ECO:0000269" key="3">
    <source>
    </source>
</evidence>
<evidence type="ECO:0000305" key="4"/>
<organism>
    <name type="scientific">Arabidopsis thaliana</name>
    <name type="common">Mouse-ear cress</name>
    <dbReference type="NCBI Taxonomy" id="3702"/>
    <lineage>
        <taxon>Eukaryota</taxon>
        <taxon>Viridiplantae</taxon>
        <taxon>Streptophyta</taxon>
        <taxon>Embryophyta</taxon>
        <taxon>Tracheophyta</taxon>
        <taxon>Spermatophyta</taxon>
        <taxon>Magnoliopsida</taxon>
        <taxon>eudicotyledons</taxon>
        <taxon>Gunneridae</taxon>
        <taxon>Pentapetalae</taxon>
        <taxon>rosids</taxon>
        <taxon>malvids</taxon>
        <taxon>Brassicales</taxon>
        <taxon>Brassicaceae</taxon>
        <taxon>Camelineae</taxon>
        <taxon>Arabidopsis</taxon>
    </lineage>
</organism>
<proteinExistence type="evidence at transcript level"/>
<comment type="subcellular location">
    <subcellularLocation>
        <location evidence="3">Nucleus</location>
    </subcellularLocation>
</comment>
<comment type="tissue specificity">
    <text evidence="2 3">Expressed in young shoots, roots, stems, leaves and flowers. At the bases of lateral organs formed from vegetative, inflorescence, and floral meristems.</text>
</comment>
<comment type="induction">
    <text evidence="3">By cytokinin.</text>
</comment>
<comment type="miscellaneous">
    <text>Over-expression of LBD3 induces a dwarf phenotype.</text>
</comment>
<comment type="similarity">
    <text evidence="4">Belongs to the LOB domain-containing protein family.</text>
</comment>
<accession>Q9SA51</accession>
<accession>B7XG63</accession>
<name>LBD3_ARATH</name>
<keyword id="KW-0539">Nucleus</keyword>
<keyword id="KW-1185">Reference proteome</keyword>
<reference key="1">
    <citation type="journal article" date="2009" name="Plant J.">
        <title>Characterization of genes in the ASYMMETRIC LEAVES2/LATERAL ORGAN BOUNDARIES (AS2/LOB) family in Arabidopsis thaliana, and functional and molecular comparisons between AS2 and other family members.</title>
        <authorList>
            <person name="Matsumura Y."/>
            <person name="Iwakawa H."/>
            <person name="Machida Y."/>
            <person name="Machida C."/>
        </authorList>
    </citation>
    <scope>NUCLEOTIDE SEQUENCE [MRNA]</scope>
    <source>
        <strain>cv. Columbia</strain>
    </source>
</reference>
<reference key="2">
    <citation type="journal article" date="2000" name="Nature">
        <title>Sequence and analysis of chromosome 1 of the plant Arabidopsis thaliana.</title>
        <authorList>
            <person name="Theologis A."/>
            <person name="Ecker J.R."/>
            <person name="Palm C.J."/>
            <person name="Federspiel N.A."/>
            <person name="Kaul S."/>
            <person name="White O."/>
            <person name="Alonso J."/>
            <person name="Altafi H."/>
            <person name="Araujo R."/>
            <person name="Bowman C.L."/>
            <person name="Brooks S.Y."/>
            <person name="Buehler E."/>
            <person name="Chan A."/>
            <person name="Chao Q."/>
            <person name="Chen H."/>
            <person name="Cheuk R.F."/>
            <person name="Chin C.W."/>
            <person name="Chung M.K."/>
            <person name="Conn L."/>
            <person name="Conway A.B."/>
            <person name="Conway A.R."/>
            <person name="Creasy T.H."/>
            <person name="Dewar K."/>
            <person name="Dunn P."/>
            <person name="Etgu P."/>
            <person name="Feldblyum T.V."/>
            <person name="Feng J.-D."/>
            <person name="Fong B."/>
            <person name="Fujii C.Y."/>
            <person name="Gill J.E."/>
            <person name="Goldsmith A.D."/>
            <person name="Haas B."/>
            <person name="Hansen N.F."/>
            <person name="Hughes B."/>
            <person name="Huizar L."/>
            <person name="Hunter J.L."/>
            <person name="Jenkins J."/>
            <person name="Johnson-Hopson C."/>
            <person name="Khan S."/>
            <person name="Khaykin E."/>
            <person name="Kim C.J."/>
            <person name="Koo H.L."/>
            <person name="Kremenetskaia I."/>
            <person name="Kurtz D.B."/>
            <person name="Kwan A."/>
            <person name="Lam B."/>
            <person name="Langin-Hooper S."/>
            <person name="Lee A."/>
            <person name="Lee J.M."/>
            <person name="Lenz C.A."/>
            <person name="Li J.H."/>
            <person name="Li Y.-P."/>
            <person name="Lin X."/>
            <person name="Liu S.X."/>
            <person name="Liu Z.A."/>
            <person name="Luros J.S."/>
            <person name="Maiti R."/>
            <person name="Marziali A."/>
            <person name="Militscher J."/>
            <person name="Miranda M."/>
            <person name="Nguyen M."/>
            <person name="Nierman W.C."/>
            <person name="Osborne B.I."/>
            <person name="Pai G."/>
            <person name="Peterson J."/>
            <person name="Pham P.K."/>
            <person name="Rizzo M."/>
            <person name="Rooney T."/>
            <person name="Rowley D."/>
            <person name="Sakano H."/>
            <person name="Salzberg S.L."/>
            <person name="Schwartz J.R."/>
            <person name="Shinn P."/>
            <person name="Southwick A.M."/>
            <person name="Sun H."/>
            <person name="Tallon L.J."/>
            <person name="Tambunga G."/>
            <person name="Toriumi M.J."/>
            <person name="Town C.D."/>
            <person name="Utterback T."/>
            <person name="Van Aken S."/>
            <person name="Vaysberg M."/>
            <person name="Vysotskaia V.S."/>
            <person name="Walker M."/>
            <person name="Wu D."/>
            <person name="Yu G."/>
            <person name="Fraser C.M."/>
            <person name="Venter J.C."/>
            <person name="Davis R.W."/>
        </authorList>
    </citation>
    <scope>NUCLEOTIDE SEQUENCE [LARGE SCALE GENOMIC DNA]</scope>
    <source>
        <strain>cv. Columbia</strain>
    </source>
</reference>
<reference key="3">
    <citation type="journal article" date="2017" name="Plant J.">
        <title>Araport11: a complete reannotation of the Arabidopsis thaliana reference genome.</title>
        <authorList>
            <person name="Cheng C.Y."/>
            <person name="Krishnakumar V."/>
            <person name="Chan A.P."/>
            <person name="Thibaud-Nissen F."/>
            <person name="Schobel S."/>
            <person name="Town C.D."/>
        </authorList>
    </citation>
    <scope>GENOME REANNOTATION</scope>
    <source>
        <strain>cv. Columbia</strain>
    </source>
</reference>
<reference key="4">
    <citation type="journal article" date="2002" name="Plant Physiol.">
        <title>The LATERAL ORGAN BOUNDARIES gene defines a novel, plant-specific gene family.</title>
        <authorList>
            <person name="Shuai B."/>
            <person name="Reynaga-Pena C.G."/>
            <person name="Springer P.S."/>
        </authorList>
    </citation>
    <scope>TISSUE SPECIFICITY</scope>
    <scope>GENE FAMILY</scope>
    <scope>NOMENCLATURE</scope>
</reference>
<reference key="5">
    <citation type="journal article" date="2007" name="Biosci. Biotechnol. Biochem.">
        <title>A link between cytokinin and ASL9 (ASYMMETRIC LEAVES 2 LIKE 9) that belongs to the AS2/LOB (LATERAL ORGAN BOUNDARIES) family genes in Arabidopsis thaliana.</title>
        <authorList>
            <person name="Naito T."/>
            <person name="Yamashino T."/>
            <person name="Kiba T."/>
            <person name="Koizumi N."/>
            <person name="Kojima M."/>
            <person name="Sakakibara H."/>
            <person name="Mizuno T."/>
        </authorList>
    </citation>
    <scope>INDUCTION BY CYTOKININ</scope>
    <scope>TISSUE SPECIFICITY</scope>
    <scope>SUBCELLULAR LOCATION</scope>
</reference>
<reference key="6">
    <citation type="journal article" date="2002" name="Plant Cell Physiol.">
        <title>The ASYMMETRIC LEAVES2 gene of Arabidopsis thaliana, required for formation of a symmetric flat leaf lamina, encodes a member of a novel family of proteins characterized by cysteine repeats and a leucine zipper.</title>
        <authorList>
            <person name="Iwakawa H."/>
            <person name="Ueno Y."/>
            <person name="Semiarti E."/>
            <person name="Onouchi H."/>
            <person name="Kojima S."/>
            <person name="Tsukaya H."/>
            <person name="Hasebe M."/>
            <person name="Soma T."/>
            <person name="Ikezaki M."/>
            <person name="Machida C."/>
            <person name="Machida Y."/>
        </authorList>
    </citation>
    <scope>GENE FAMILY</scope>
    <scope>NOMENCLATURE</scope>
</reference>
<dbReference type="EMBL" id="AB473842">
    <property type="protein sequence ID" value="BAH10553.1"/>
    <property type="molecule type" value="mRNA"/>
</dbReference>
<dbReference type="EMBL" id="AC006341">
    <property type="protein sequence ID" value="AAD34704.1"/>
    <property type="molecule type" value="Genomic_DNA"/>
</dbReference>
<dbReference type="EMBL" id="CP002684">
    <property type="protein sequence ID" value="AEE29466.1"/>
    <property type="molecule type" value="Genomic_DNA"/>
</dbReference>
<dbReference type="RefSeq" id="NP_173102.1">
    <property type="nucleotide sequence ID" value="NM_101518.4"/>
</dbReference>
<dbReference type="SMR" id="Q9SA51"/>
<dbReference type="BioGRID" id="23463">
    <property type="interactions" value="2"/>
</dbReference>
<dbReference type="FunCoup" id="Q9SA51">
    <property type="interactions" value="21"/>
</dbReference>
<dbReference type="IntAct" id="Q9SA51">
    <property type="interactions" value="1"/>
</dbReference>
<dbReference type="STRING" id="3702.Q9SA51"/>
<dbReference type="PaxDb" id="3702-AT1G16530.1"/>
<dbReference type="DNASU" id="838223"/>
<dbReference type="EnsemblPlants" id="AT1G16530.1">
    <property type="protein sequence ID" value="AT1G16530.1"/>
    <property type="gene ID" value="AT1G16530"/>
</dbReference>
<dbReference type="GeneID" id="838223"/>
<dbReference type="Gramene" id="AT1G16530.1">
    <property type="protein sequence ID" value="AT1G16530.1"/>
    <property type="gene ID" value="AT1G16530"/>
</dbReference>
<dbReference type="KEGG" id="ath:AT1G16530"/>
<dbReference type="Araport" id="AT1G16530"/>
<dbReference type="TAIR" id="AT1G16530">
    <property type="gene designation" value="ASL9"/>
</dbReference>
<dbReference type="eggNOG" id="ENOG502R4HI">
    <property type="taxonomic scope" value="Eukaryota"/>
</dbReference>
<dbReference type="HOGENOM" id="CLU_058353_5_2_1"/>
<dbReference type="InParanoid" id="Q9SA51"/>
<dbReference type="OMA" id="MCHASTS"/>
<dbReference type="OrthoDB" id="2020166at2759"/>
<dbReference type="PhylomeDB" id="Q9SA51"/>
<dbReference type="PRO" id="PR:Q9SA51"/>
<dbReference type="Proteomes" id="UP000006548">
    <property type="component" value="Chromosome 1"/>
</dbReference>
<dbReference type="ExpressionAtlas" id="Q9SA51">
    <property type="expression patterns" value="baseline and differential"/>
</dbReference>
<dbReference type="GO" id="GO:0005634">
    <property type="term" value="C:nucleus"/>
    <property type="evidence" value="ECO:0007669"/>
    <property type="project" value="UniProtKB-SubCell"/>
</dbReference>
<dbReference type="GO" id="GO:0000976">
    <property type="term" value="F:transcription cis-regulatory region binding"/>
    <property type="evidence" value="ECO:0000353"/>
    <property type="project" value="TAIR"/>
</dbReference>
<dbReference type="InterPro" id="IPR004883">
    <property type="entry name" value="LOB"/>
</dbReference>
<dbReference type="PANTHER" id="PTHR31301:SF58">
    <property type="entry name" value="LOB DOMAIN-CONTAINING PROTEIN 3"/>
    <property type="match status" value="1"/>
</dbReference>
<dbReference type="PANTHER" id="PTHR31301">
    <property type="entry name" value="LOB DOMAIN-CONTAINING PROTEIN 4-RELATED"/>
    <property type="match status" value="1"/>
</dbReference>
<dbReference type="Pfam" id="PF03195">
    <property type="entry name" value="LOB"/>
    <property type="match status" value="1"/>
</dbReference>
<dbReference type="PROSITE" id="PS50891">
    <property type="entry name" value="LOB"/>
    <property type="match status" value="1"/>
</dbReference>
<feature type="chain" id="PRO_0000132254" description="LOB domain-containing protein 3">
    <location>
        <begin position="1"/>
        <end position="165"/>
    </location>
</feature>
<feature type="domain" description="LOB" evidence="1">
    <location>
        <begin position="13"/>
        <end position="115"/>
    </location>
</feature>
<gene>
    <name type="primary">LBD3</name>
    <name type="synonym">ASL9</name>
    <name type="ordered locus">At1g16530</name>
    <name type="ORF">F3O9.33</name>
</gene>